<gene>
    <name evidence="1" type="primary">ureE</name>
    <name type="ordered locus">BB4322</name>
</gene>
<sequence length="205" mass="22065">MKIANTFIKRGAAGGLDLSQAPGVTLTLAERRRSRQRLDLDEGRGELGMAIERGQTLRDGDVLVAEDGTYVVVRAALEDVARVTAATPWQLARAAYHLGNRHVLLEIAERHLQFEYDAVLIDMLAQLGGVTATRLRAVFEPDVGAYGGGHRHGHDESFGDDYALAQAAYHAHEAHPHAHSHAGGHGHVHSGHGHGGKHGEHDAES</sequence>
<reference key="1">
    <citation type="journal article" date="2003" name="Nat. Genet.">
        <title>Comparative analysis of the genome sequences of Bordetella pertussis, Bordetella parapertussis and Bordetella bronchiseptica.</title>
        <authorList>
            <person name="Parkhill J."/>
            <person name="Sebaihia M."/>
            <person name="Preston A."/>
            <person name="Murphy L.D."/>
            <person name="Thomson N.R."/>
            <person name="Harris D.E."/>
            <person name="Holden M.T.G."/>
            <person name="Churcher C.M."/>
            <person name="Bentley S.D."/>
            <person name="Mungall K.L."/>
            <person name="Cerdeno-Tarraga A.-M."/>
            <person name="Temple L."/>
            <person name="James K.D."/>
            <person name="Harris B."/>
            <person name="Quail M.A."/>
            <person name="Achtman M."/>
            <person name="Atkin R."/>
            <person name="Baker S."/>
            <person name="Basham D."/>
            <person name="Bason N."/>
            <person name="Cherevach I."/>
            <person name="Chillingworth T."/>
            <person name="Collins M."/>
            <person name="Cronin A."/>
            <person name="Davis P."/>
            <person name="Doggett J."/>
            <person name="Feltwell T."/>
            <person name="Goble A."/>
            <person name="Hamlin N."/>
            <person name="Hauser H."/>
            <person name="Holroyd S."/>
            <person name="Jagels K."/>
            <person name="Leather S."/>
            <person name="Moule S."/>
            <person name="Norberczak H."/>
            <person name="O'Neil S."/>
            <person name="Ormond D."/>
            <person name="Price C."/>
            <person name="Rabbinowitsch E."/>
            <person name="Rutter S."/>
            <person name="Sanders M."/>
            <person name="Saunders D."/>
            <person name="Seeger K."/>
            <person name="Sharp S."/>
            <person name="Simmonds M."/>
            <person name="Skelton J."/>
            <person name="Squares R."/>
            <person name="Squares S."/>
            <person name="Stevens K."/>
            <person name="Unwin L."/>
            <person name="Whitehead S."/>
            <person name="Barrell B.G."/>
            <person name="Maskell D.J."/>
        </authorList>
    </citation>
    <scope>NUCLEOTIDE SEQUENCE [LARGE SCALE GENOMIC DNA]</scope>
    <source>
        <strain>ATCC BAA-588 / NCTC 13252 / RB50</strain>
    </source>
</reference>
<feature type="chain" id="PRO_0000223401" description="Urease accessory protein UreE">
    <location>
        <begin position="1"/>
        <end position="205"/>
    </location>
</feature>
<feature type="region of interest" description="Disordered" evidence="2">
    <location>
        <begin position="171"/>
        <end position="205"/>
    </location>
</feature>
<feature type="compositionally biased region" description="Basic residues" evidence="2">
    <location>
        <begin position="177"/>
        <end position="196"/>
    </location>
</feature>
<accession>Q7WFF2</accession>
<name>UREE_BORBR</name>
<protein>
    <recommendedName>
        <fullName evidence="1">Urease accessory protein UreE</fullName>
    </recommendedName>
</protein>
<keyword id="KW-0143">Chaperone</keyword>
<keyword id="KW-0963">Cytoplasm</keyword>
<keyword id="KW-0533">Nickel</keyword>
<keyword id="KW-0996">Nickel insertion</keyword>
<proteinExistence type="inferred from homology"/>
<comment type="function">
    <text evidence="1">Involved in urease metallocenter assembly. Binds nickel. Probably functions as a nickel donor during metallocenter assembly.</text>
</comment>
<comment type="subcellular location">
    <subcellularLocation>
        <location evidence="1">Cytoplasm</location>
    </subcellularLocation>
</comment>
<comment type="similarity">
    <text evidence="1">Belongs to the UreE family.</text>
</comment>
<evidence type="ECO:0000255" key="1">
    <source>
        <dbReference type="HAMAP-Rule" id="MF_00822"/>
    </source>
</evidence>
<evidence type="ECO:0000256" key="2">
    <source>
        <dbReference type="SAM" id="MobiDB-lite"/>
    </source>
</evidence>
<organism>
    <name type="scientific">Bordetella bronchiseptica (strain ATCC BAA-588 / NCTC 13252 / RB50)</name>
    <name type="common">Alcaligenes bronchisepticus</name>
    <dbReference type="NCBI Taxonomy" id="257310"/>
    <lineage>
        <taxon>Bacteria</taxon>
        <taxon>Pseudomonadati</taxon>
        <taxon>Pseudomonadota</taxon>
        <taxon>Betaproteobacteria</taxon>
        <taxon>Burkholderiales</taxon>
        <taxon>Alcaligenaceae</taxon>
        <taxon>Bordetella</taxon>
    </lineage>
</organism>
<dbReference type="EMBL" id="BX640450">
    <property type="protein sequence ID" value="CAE34685.1"/>
    <property type="molecule type" value="Genomic_DNA"/>
</dbReference>
<dbReference type="RefSeq" id="WP_003814822.1">
    <property type="nucleotide sequence ID" value="NC_002927.3"/>
</dbReference>
<dbReference type="SMR" id="Q7WFF2"/>
<dbReference type="KEGG" id="bbr:BB4322"/>
<dbReference type="eggNOG" id="COG2371">
    <property type="taxonomic scope" value="Bacteria"/>
</dbReference>
<dbReference type="HOGENOM" id="CLU_093757_0_0_4"/>
<dbReference type="Proteomes" id="UP000001027">
    <property type="component" value="Chromosome"/>
</dbReference>
<dbReference type="GO" id="GO:0005737">
    <property type="term" value="C:cytoplasm"/>
    <property type="evidence" value="ECO:0007669"/>
    <property type="project" value="UniProtKB-SubCell"/>
</dbReference>
<dbReference type="GO" id="GO:0016151">
    <property type="term" value="F:nickel cation binding"/>
    <property type="evidence" value="ECO:0007669"/>
    <property type="project" value="UniProtKB-UniRule"/>
</dbReference>
<dbReference type="GO" id="GO:0051082">
    <property type="term" value="F:unfolded protein binding"/>
    <property type="evidence" value="ECO:0007669"/>
    <property type="project" value="UniProtKB-UniRule"/>
</dbReference>
<dbReference type="GO" id="GO:0006457">
    <property type="term" value="P:protein folding"/>
    <property type="evidence" value="ECO:0007669"/>
    <property type="project" value="InterPro"/>
</dbReference>
<dbReference type="GO" id="GO:0065003">
    <property type="term" value="P:protein-containing complex assembly"/>
    <property type="evidence" value="ECO:0007669"/>
    <property type="project" value="InterPro"/>
</dbReference>
<dbReference type="GO" id="GO:0019627">
    <property type="term" value="P:urea metabolic process"/>
    <property type="evidence" value="ECO:0007669"/>
    <property type="project" value="InterPro"/>
</dbReference>
<dbReference type="CDD" id="cd00571">
    <property type="entry name" value="UreE"/>
    <property type="match status" value="1"/>
</dbReference>
<dbReference type="Gene3D" id="2.60.260.20">
    <property type="entry name" value="Urease metallochaperone UreE, N-terminal domain"/>
    <property type="match status" value="1"/>
</dbReference>
<dbReference type="Gene3D" id="3.30.70.790">
    <property type="entry name" value="UreE, C-terminal domain"/>
    <property type="match status" value="1"/>
</dbReference>
<dbReference type="HAMAP" id="MF_00822">
    <property type="entry name" value="UreE"/>
    <property type="match status" value="1"/>
</dbReference>
<dbReference type="InterPro" id="IPR012406">
    <property type="entry name" value="UreE"/>
</dbReference>
<dbReference type="InterPro" id="IPR007864">
    <property type="entry name" value="UreE_C_dom"/>
</dbReference>
<dbReference type="InterPro" id="IPR004029">
    <property type="entry name" value="UreE_N"/>
</dbReference>
<dbReference type="InterPro" id="IPR036118">
    <property type="entry name" value="UreE_N_sf"/>
</dbReference>
<dbReference type="NCBIfam" id="NF009762">
    <property type="entry name" value="PRK13263.1"/>
    <property type="match status" value="1"/>
</dbReference>
<dbReference type="Pfam" id="PF05194">
    <property type="entry name" value="UreE_C"/>
    <property type="match status" value="1"/>
</dbReference>
<dbReference type="Pfam" id="PF02814">
    <property type="entry name" value="UreE_N"/>
    <property type="match status" value="1"/>
</dbReference>
<dbReference type="SMART" id="SM00988">
    <property type="entry name" value="UreE_N"/>
    <property type="match status" value="1"/>
</dbReference>
<dbReference type="SUPFAM" id="SSF69737">
    <property type="entry name" value="Urease metallochaperone UreE, C-terminal domain"/>
    <property type="match status" value="1"/>
</dbReference>
<dbReference type="SUPFAM" id="SSF69287">
    <property type="entry name" value="Urease metallochaperone UreE, N-terminal domain"/>
    <property type="match status" value="1"/>
</dbReference>